<organism>
    <name type="scientific">Escherichia coli (strain UTI89 / UPEC)</name>
    <dbReference type="NCBI Taxonomy" id="364106"/>
    <lineage>
        <taxon>Bacteria</taxon>
        <taxon>Pseudomonadati</taxon>
        <taxon>Pseudomonadota</taxon>
        <taxon>Gammaproteobacteria</taxon>
        <taxon>Enterobacterales</taxon>
        <taxon>Enterobacteriaceae</taxon>
        <taxon>Escherichia</taxon>
    </lineage>
</organism>
<sequence length="474" mass="53542">MSRLVVVSNRIAPPDEHAASAGGLAVGILGALKAAGGLWFGWSGETGNEDQPLKKVKKGNITWASFNLSEQDLDEYYNKFSNAVLWPAFHYRLDLVQFQRPAWDGYLRVNALLADKLLPLLQDDDIIWIHDYHLLPFAHELRKRGVNNRIGFFLHIPFPTPEIFNALPTYDTLLEQLCEYDLLGFQTENDRLAFLDCLSNLTRVTTRSAKSHTACGKAFRTEVYPIGIEPKEIAKQAAGPLPPKLAQLKAELKNVQNIFSVERLDYSKGLPERFLAYEALLEKYPQHHGKIRYTQIAPTSRGDVQAYQDIRHQLENEAGRINGKYGQLGWTPLYYLNQHFDRKLLMKIFRYSDVGLVTPLRDGMNLVAKEYVAAQDPANPGVLVLSQFAGAANELTSALIVNPYDRDEVAAALDRALTMSLAERISRHAEMLDVIVKNDINHWQECFISDLKQIVPRSAESQQRDKVATFPKLA</sequence>
<name>OTSA_ECOUT</name>
<evidence type="ECO:0000250" key="1">
    <source>
        <dbReference type="UniProtKB" id="P31677"/>
    </source>
</evidence>
<evidence type="ECO:0000305" key="2"/>
<feature type="chain" id="PRO_0000348896" description="Trehalose-6-phosphate synthase">
    <location>
        <begin position="1"/>
        <end position="474"/>
    </location>
</feature>
<feature type="binding site" evidence="1">
    <location>
        <position position="10"/>
    </location>
    <ligand>
        <name>D-glucose 6-phosphate</name>
        <dbReference type="ChEBI" id="CHEBI:61548"/>
    </ligand>
</feature>
<feature type="binding site" evidence="1">
    <location>
        <begin position="22"/>
        <end position="23"/>
    </location>
    <ligand>
        <name>UDP-alpha-D-glucose</name>
        <dbReference type="ChEBI" id="CHEBI:58885"/>
    </ligand>
</feature>
<feature type="binding site" evidence="1">
    <location>
        <position position="77"/>
    </location>
    <ligand>
        <name>D-glucose 6-phosphate</name>
        <dbReference type="ChEBI" id="CHEBI:61548"/>
    </ligand>
</feature>
<feature type="binding site" evidence="1">
    <location>
        <position position="131"/>
    </location>
    <ligand>
        <name>D-glucose 6-phosphate</name>
        <dbReference type="ChEBI" id="CHEBI:61548"/>
    </ligand>
</feature>
<feature type="binding site" evidence="1">
    <location>
        <position position="263"/>
    </location>
    <ligand>
        <name>UDP-alpha-D-glucose</name>
        <dbReference type="ChEBI" id="CHEBI:58885"/>
    </ligand>
</feature>
<feature type="binding site" evidence="1">
    <location>
        <position position="268"/>
    </location>
    <ligand>
        <name>UDP-alpha-D-glucose</name>
        <dbReference type="ChEBI" id="CHEBI:58885"/>
    </ligand>
</feature>
<feature type="binding site" evidence="1">
    <location>
        <position position="301"/>
    </location>
    <ligand>
        <name>D-glucose 6-phosphate</name>
        <dbReference type="ChEBI" id="CHEBI:61548"/>
    </ligand>
</feature>
<feature type="binding site" evidence="1">
    <location>
        <position position="340"/>
    </location>
    <ligand>
        <name>UDP-alpha-D-glucose</name>
        <dbReference type="ChEBI" id="CHEBI:58885"/>
    </ligand>
</feature>
<feature type="binding site" evidence="1">
    <location>
        <begin position="366"/>
        <end position="370"/>
    </location>
    <ligand>
        <name>UDP-alpha-D-glucose</name>
        <dbReference type="ChEBI" id="CHEBI:58885"/>
    </ligand>
</feature>
<feature type="site" description="Involved in alpha anomer selectivity" evidence="1">
    <location>
        <position position="86"/>
    </location>
</feature>
<feature type="site" description="Involved in alpha anomer selectivity" evidence="1">
    <location>
        <position position="156"/>
    </location>
</feature>
<dbReference type="EC" id="2.4.1.15" evidence="1"/>
<dbReference type="EMBL" id="CP000243">
    <property type="protein sequence ID" value="ABE07573.1"/>
    <property type="status" value="ALT_INIT"/>
    <property type="molecule type" value="Genomic_DNA"/>
</dbReference>
<dbReference type="RefSeq" id="WP_001332091.1">
    <property type="nucleotide sequence ID" value="NZ_CP064825.1"/>
</dbReference>
<dbReference type="SMR" id="Q1RAP1"/>
<dbReference type="CAZy" id="GT20">
    <property type="family name" value="Glycosyltransferase Family 20"/>
</dbReference>
<dbReference type="KEGG" id="eci:UTI89_C2097"/>
<dbReference type="HOGENOM" id="CLU_002351_7_1_6"/>
<dbReference type="UniPathway" id="UPA00299"/>
<dbReference type="Proteomes" id="UP000001952">
    <property type="component" value="Chromosome"/>
</dbReference>
<dbReference type="GO" id="GO:0003825">
    <property type="term" value="F:alpha,alpha-trehalose-phosphate synthase (UDP-forming) activity"/>
    <property type="evidence" value="ECO:0007669"/>
    <property type="project" value="UniProtKB-EC"/>
</dbReference>
<dbReference type="GO" id="GO:0005992">
    <property type="term" value="P:trehalose biosynthetic process"/>
    <property type="evidence" value="ECO:0007669"/>
    <property type="project" value="UniProtKB-UniPathway"/>
</dbReference>
<dbReference type="CDD" id="cd03788">
    <property type="entry name" value="GT20_TPS"/>
    <property type="match status" value="1"/>
</dbReference>
<dbReference type="FunFam" id="3.40.50.2000:FF:000024">
    <property type="entry name" value="Trehalose-6-phosphate synthase"/>
    <property type="match status" value="1"/>
</dbReference>
<dbReference type="Gene3D" id="3.40.50.2000">
    <property type="entry name" value="Glycogen Phosphorylase B"/>
    <property type="match status" value="2"/>
</dbReference>
<dbReference type="InterPro" id="IPR001830">
    <property type="entry name" value="Glyco_trans_20"/>
</dbReference>
<dbReference type="InterPro" id="IPR012766">
    <property type="entry name" value="Trehalose_OtsA"/>
</dbReference>
<dbReference type="NCBIfam" id="NF007513">
    <property type="entry name" value="PRK10117.1"/>
    <property type="match status" value="1"/>
</dbReference>
<dbReference type="NCBIfam" id="TIGR02400">
    <property type="entry name" value="trehalose_OtsA"/>
    <property type="match status" value="1"/>
</dbReference>
<dbReference type="PANTHER" id="PTHR10788:SF106">
    <property type="entry name" value="BCDNA.GH08860"/>
    <property type="match status" value="1"/>
</dbReference>
<dbReference type="PANTHER" id="PTHR10788">
    <property type="entry name" value="TREHALOSE-6-PHOSPHATE SYNTHASE"/>
    <property type="match status" value="1"/>
</dbReference>
<dbReference type="Pfam" id="PF00982">
    <property type="entry name" value="Glyco_transf_20"/>
    <property type="match status" value="1"/>
</dbReference>
<dbReference type="SUPFAM" id="SSF53756">
    <property type="entry name" value="UDP-Glycosyltransferase/glycogen phosphorylase"/>
    <property type="match status" value="1"/>
</dbReference>
<gene>
    <name evidence="1" type="primary">otsA</name>
    <name type="ordered locus">UTI89_C2097</name>
</gene>
<protein>
    <recommendedName>
        <fullName evidence="1">Trehalose-6-phosphate synthase</fullName>
        <shortName evidence="1">TPS</shortName>
        <ecNumber evidence="1">2.4.1.15</ecNumber>
    </recommendedName>
    <alternativeName>
        <fullName evidence="1">Alpha,alpha-trehalose-phosphate synthase [UDP-forming]</fullName>
    </alternativeName>
    <alternativeName>
        <fullName evidence="1">Osmoregulatory trehalose synthesis protein A</fullName>
        <shortName evidence="1">OtsA</shortName>
    </alternativeName>
    <alternativeName>
        <fullName evidence="1">UDP-glucose-glucosephosphate glucosyltransferase</fullName>
    </alternativeName>
</protein>
<keyword id="KW-0328">Glycosyltransferase</keyword>
<keyword id="KW-0808">Transferase</keyword>
<proteinExistence type="inferred from homology"/>
<accession>Q1RAP1</accession>
<comment type="function">
    <text evidence="1">Probably involved in the osmoprotection via the biosynthesis of trehalose. Catalyzes the transfer of glucose from UDP-alpha-D-glucose (UDP-Glc) to D-glucose 6-phosphate (Glc-6-P) to form trehalose-6-phosphate. Acts with retention of the anomeric configuration of the UDP-sugar donor.</text>
</comment>
<comment type="catalytic activity">
    <reaction evidence="1">
        <text>D-glucose 6-phosphate + UDP-alpha-D-glucose = alpha,alpha-trehalose 6-phosphate + UDP + H(+)</text>
        <dbReference type="Rhea" id="RHEA:18889"/>
        <dbReference type="ChEBI" id="CHEBI:15378"/>
        <dbReference type="ChEBI" id="CHEBI:58223"/>
        <dbReference type="ChEBI" id="CHEBI:58429"/>
        <dbReference type="ChEBI" id="CHEBI:58885"/>
        <dbReference type="ChEBI" id="CHEBI:61548"/>
        <dbReference type="EC" id="2.4.1.15"/>
    </reaction>
</comment>
<comment type="pathway">
    <text evidence="1">Glycan biosynthesis; trehalose biosynthesis.</text>
</comment>
<comment type="subunit">
    <text evidence="1">Homotetramer.</text>
</comment>
<comment type="similarity">
    <text evidence="1">Belongs to the glycosyltransferase 20 family.</text>
</comment>
<comment type="sequence caution" evidence="2">
    <conflict type="erroneous initiation">
        <sequence resource="EMBL-CDS" id="ABE07573"/>
    </conflict>
</comment>
<reference key="1">
    <citation type="journal article" date="2006" name="Proc. Natl. Acad. Sci. U.S.A.">
        <title>Identification of genes subject to positive selection in uropathogenic strains of Escherichia coli: a comparative genomics approach.</title>
        <authorList>
            <person name="Chen S.L."/>
            <person name="Hung C.-S."/>
            <person name="Xu J."/>
            <person name="Reigstad C.S."/>
            <person name="Magrini V."/>
            <person name="Sabo A."/>
            <person name="Blasiar D."/>
            <person name="Bieri T."/>
            <person name="Meyer R.R."/>
            <person name="Ozersky P."/>
            <person name="Armstrong J.R."/>
            <person name="Fulton R.S."/>
            <person name="Latreille J.P."/>
            <person name="Spieth J."/>
            <person name="Hooton T.M."/>
            <person name="Mardis E.R."/>
            <person name="Hultgren S.J."/>
            <person name="Gordon J.I."/>
        </authorList>
    </citation>
    <scope>NUCLEOTIDE SEQUENCE [LARGE SCALE GENOMIC DNA]</scope>
    <source>
        <strain>UTI89 / UPEC</strain>
    </source>
</reference>